<gene>
    <name evidence="6" type="primary">phoV</name>
</gene>
<organism>
    <name type="scientific">Synechococcus elongatus (strain ATCC 33912 / PCC 7942 / FACHB-805)</name>
    <name type="common">Anacystis nidulans R2</name>
    <dbReference type="NCBI Taxonomy" id="1140"/>
    <lineage>
        <taxon>Bacteria</taxon>
        <taxon>Bacillati</taxon>
        <taxon>Cyanobacteriota</taxon>
        <taxon>Cyanophyceae</taxon>
        <taxon>Synechococcales</taxon>
        <taxon>Synechococcaceae</taxon>
        <taxon>Synechococcus</taxon>
    </lineage>
</organism>
<reference evidence="5 6" key="1">
    <citation type="journal article" date="1995" name="Microbiology">
        <title>The cyanobacterium Synechococcus sp. strain PCC7942 contains a second alkaline phosphatase encoded by phoV.</title>
        <authorList>
            <person name="Wagner K.U."/>
            <person name="Masepohl B."/>
            <person name="Pistorius E.K."/>
        </authorList>
    </citation>
    <scope>NUCLEOTIDE SEQUENCE [GENOMIC DNA]</scope>
    <scope>GENE NAME</scope>
    <scope>FUNCTION</scope>
    <scope>CATALYTIC ACTIVITY</scope>
    <scope>COFACTOR</scope>
    <scope>ACTIVITY REGULATION</scope>
    <scope>BIOPHYSICOCHEMICAL PROPERTIES</scope>
    <scope>SUBCELLULAR LOCATION</scope>
    <source>
        <strain evidence="3">ATCC 33912 / PCC 7942 / FACHB-805</strain>
    </source>
</reference>
<dbReference type="EC" id="3.1.3.1" evidence="3"/>
<dbReference type="EMBL" id="Z48801">
    <property type="protein sequence ID" value="CAA88739.1"/>
    <property type="molecule type" value="Genomic_DNA"/>
</dbReference>
<dbReference type="SMR" id="Q55320"/>
<dbReference type="GO" id="GO:0009276">
    <property type="term" value="C:Gram-negative-bacterium-type cell wall"/>
    <property type="evidence" value="ECO:0000314"/>
    <property type="project" value="UniProtKB"/>
</dbReference>
<dbReference type="GO" id="GO:0005886">
    <property type="term" value="C:plasma membrane"/>
    <property type="evidence" value="ECO:0007669"/>
    <property type="project" value="UniProtKB-SubCell"/>
</dbReference>
<dbReference type="GO" id="GO:0098552">
    <property type="term" value="C:side of membrane"/>
    <property type="evidence" value="ECO:0000314"/>
    <property type="project" value="UniProtKB"/>
</dbReference>
<dbReference type="GO" id="GO:0004035">
    <property type="term" value="F:alkaline phosphatase activity"/>
    <property type="evidence" value="ECO:0000314"/>
    <property type="project" value="UniProtKB"/>
</dbReference>
<dbReference type="GO" id="GO:0004346">
    <property type="term" value="F:glucose-6-phosphatase activity"/>
    <property type="evidence" value="ECO:0000314"/>
    <property type="project" value="UniProtKB"/>
</dbReference>
<dbReference type="GO" id="GO:0046872">
    <property type="term" value="F:metal ion binding"/>
    <property type="evidence" value="ECO:0000250"/>
    <property type="project" value="UniProtKB"/>
</dbReference>
<dbReference type="GO" id="GO:0050192">
    <property type="term" value="F:phosphoglycerate phosphatase activity"/>
    <property type="evidence" value="ECO:0000314"/>
    <property type="project" value="UniProtKB"/>
</dbReference>
<dbReference type="GO" id="GO:0050308">
    <property type="term" value="F:sugar-phosphatase activity"/>
    <property type="evidence" value="ECO:0000314"/>
    <property type="project" value="UniProtKB"/>
</dbReference>
<dbReference type="GO" id="GO:0008270">
    <property type="term" value="F:zinc ion binding"/>
    <property type="evidence" value="ECO:0000250"/>
    <property type="project" value="UniProtKB"/>
</dbReference>
<dbReference type="GO" id="GO:0006002">
    <property type="term" value="P:fructose 6-phosphate metabolic process"/>
    <property type="evidence" value="ECO:0000314"/>
    <property type="project" value="UniProtKB"/>
</dbReference>
<dbReference type="GO" id="GO:0006603">
    <property type="term" value="P:phosphocreatine metabolic process"/>
    <property type="evidence" value="ECO:0000314"/>
    <property type="project" value="UniProtKB"/>
</dbReference>
<dbReference type="CDD" id="cd16016">
    <property type="entry name" value="AP-SPAP"/>
    <property type="match status" value="1"/>
</dbReference>
<dbReference type="Gene3D" id="3.30.1360.150">
    <property type="match status" value="1"/>
</dbReference>
<dbReference type="Gene3D" id="3.40.720.10">
    <property type="entry name" value="Alkaline Phosphatase, subunit A"/>
    <property type="match status" value="1"/>
</dbReference>
<dbReference type="InterPro" id="IPR017850">
    <property type="entry name" value="Alkaline_phosphatase_core_sf"/>
</dbReference>
<dbReference type="InterPro" id="IPR026263">
    <property type="entry name" value="Alkaline_phosphatase_prok"/>
</dbReference>
<dbReference type="InterPro" id="IPR002591">
    <property type="entry name" value="Phosphodiest/P_Trfase"/>
</dbReference>
<dbReference type="NCBIfam" id="NF042991">
    <property type="entry name" value="alk_phos_PafA"/>
    <property type="match status" value="1"/>
</dbReference>
<dbReference type="PANTHER" id="PTHR10151:SF120">
    <property type="entry name" value="BIS(5'-ADENOSYL)-TRIPHOSPHATASE"/>
    <property type="match status" value="1"/>
</dbReference>
<dbReference type="PANTHER" id="PTHR10151">
    <property type="entry name" value="ECTONUCLEOTIDE PYROPHOSPHATASE/PHOSPHODIESTERASE"/>
    <property type="match status" value="1"/>
</dbReference>
<dbReference type="Pfam" id="PF01663">
    <property type="entry name" value="Phosphodiest"/>
    <property type="match status" value="1"/>
</dbReference>
<dbReference type="PIRSF" id="PIRSF031924">
    <property type="entry name" value="Pi-irrepressible_AP"/>
    <property type="match status" value="1"/>
</dbReference>
<dbReference type="SUPFAM" id="SSF53649">
    <property type="entry name" value="Alkaline phosphatase-like"/>
    <property type="match status" value="1"/>
</dbReference>
<accession>Q55320</accession>
<sequence length="550" mass="61325">MKIKLLCISLAVLFCSSANAQKKQAKVQPSVFPQTVARPKLVVGMVIDQMRWDYLYRFYARYGNGGFKRLINEGFSAENTLIPYTPTLTACGHSSIYTGSVPAINGIIGNNWFDPQLGRDVYCVEDKSVKTVGSSSNEGLMSPKNLLVTTVTDELRMATNFRSKVISVSIKDRGAILPGGHTANGAYWYDDMTGSFISSTHYMQQLPTWVNDFNAQRLPNKYFEQDWNTLYPIETYTESTADAKPYERTFKGAKTSSFPHLFKQYANKNYSMMASMPQGNSFTLEFAKAAIPAEKLGQTGNTDFLAVSLSSTDYVGHQFGPNSIELEDTYLRLDKDLEDFFNYLDKTIGKGNYLLFLTADHGATHVPGFLRNKMPGGRLLLKVQTDLDSLIFNEFKVRCNFTIINNQVIFDTDAIKEAKADYAKIKQSTIDYLVKQDGVLNAVDIKNMGAVTIPQEIKNKIINGYNARRSGDVYIILDAGWYPTLTPGTGHAAWNPYDSHIPALFMGWGVKPGKTNKEYYMSDIAPTVSALLHIQQPSGSIGKVITDLLK</sequence>
<name>ALPH_SYNE7</name>
<comment type="function">
    <text evidence="3">Alkaline phosphatase with broad substrate specificity.</text>
</comment>
<comment type="catalytic activity">
    <reaction evidence="3">
        <text>a phosphate monoester + H2O = an alcohol + phosphate</text>
        <dbReference type="Rhea" id="RHEA:15017"/>
        <dbReference type="ChEBI" id="CHEBI:15377"/>
        <dbReference type="ChEBI" id="CHEBI:30879"/>
        <dbReference type="ChEBI" id="CHEBI:43474"/>
        <dbReference type="ChEBI" id="CHEBI:67140"/>
        <dbReference type="EC" id="3.1.3.1"/>
    </reaction>
</comment>
<comment type="cofactor">
    <cofactor evidence="1 3">
        <name>Zn(2+)</name>
        <dbReference type="ChEBI" id="CHEBI:29105"/>
    </cofactor>
    <text evidence="1 3">Binds 2 Zn(2+) ions.</text>
</comment>
<comment type="activity regulation">
    <text evidence="3">Subject to competitive inhibition by phosphate. Inhibited by manganese. Magnesium mildly increases enzyme activity when the zinc concentration is suboptimal. Optimal activity is dependent on the presence of 0.01-2% Triton X-100. Triton X-100 at a concentration of 0.05% increases the activity about fivefold relative to that in its absence. The enzyme is even active in Triton X-100 concentrations up to 80%. 50% inhibition by 4 mM EDTA and 50% inhibition by 48 mM sodium citrate.</text>
</comment>
<comment type="biophysicochemical properties">
    <kinetics>
        <KM evidence="3">0.1 mM for 4-nitrophenyl phosphate</KM>
        <KM evidence="3">1 mM for ATP</KM>
        <KM evidence="3">0.5 mM for ADP</KM>
        <KM evidence="3">1.5 mM for AMP</KM>
        <KM evidence="3">1.9 mM for D-glucose 6-phosphate</KM>
        <KM evidence="3">1.4 mM for fructose 1,6-phosphate</KM>
        <KM evidence="3">2.3 mM for fructose 6-phosphate</KM>
        <KM evidence="3">3.8 mM for fructose 1-phosphate</KM>
        <KM evidence="3">1.9 mM for 3-phosphoglycerate</KM>
        <KM evidence="3">2.4 mM for 3-phosphocreatine</KM>
    </kinetics>
    <phDependence>
        <text evidence="3">Optimum pH is 7-10. Activity on 4-nitrophenyl phosphate is observed between pH 6 and pH 11.</text>
    </phDependence>
    <temperatureDependence>
        <text evidence="3">Heat-labile. Activity increases with temperature between 15 and 35 degrees Celsius and decreases with further heating. No activity at 65 degrees Celsius. Preincubation for 10 minutes at 50 or 60 degrees Celsius causes 50% or 100% inactivation, respectively. Heat-inactivated enzyme cannot be renaturated.</text>
    </temperatureDependence>
</comment>
<comment type="subcellular location">
    <subcellularLocation>
        <location evidence="3">Cell inner membrane</location>
        <topology evidence="3 5">Lipid-anchor</topology>
        <orientation evidence="3">Periplasmic side</orientation>
    </subcellularLocation>
    <subcellularLocation>
        <location evidence="3">Cell inner membrane</location>
        <topology evidence="3">Peripheral membrane protein</topology>
        <orientation evidence="3">Periplasmic side</orientation>
    </subcellularLocation>
    <text evidence="3">Associated with the periplasmic side of the inner membrane.</text>
</comment>
<proteinExistence type="evidence at protein level"/>
<protein>
    <recommendedName>
        <fullName evidence="4 6">Alkaline phosphatase PhoV</fullName>
        <shortName evidence="4">APase PhoV</shortName>
        <ecNumber evidence="3">3.1.3.1</ecNumber>
    </recommendedName>
</protein>
<keyword id="KW-0997">Cell inner membrane</keyword>
<keyword id="KW-1003">Cell membrane</keyword>
<keyword id="KW-0378">Hydrolase</keyword>
<keyword id="KW-0449">Lipoprotein</keyword>
<keyword id="KW-0472">Membrane</keyword>
<keyword id="KW-0479">Metal-binding</keyword>
<keyword id="KW-0597">Phosphoprotein</keyword>
<keyword id="KW-0732">Signal</keyword>
<keyword id="KW-0862">Zinc</keyword>
<feature type="signal peptide" evidence="2">
    <location>
        <begin position="1"/>
        <end position="20"/>
    </location>
</feature>
<feature type="chain" id="PRO_0000425537" description="Alkaline phosphatase PhoV" evidence="2">
    <location>
        <begin position="21"/>
        <end position="550"/>
    </location>
</feature>
<feature type="active site" description="Phosphothreonine intermediate" evidence="1">
    <location>
        <position position="89"/>
    </location>
</feature>
<feature type="binding site" evidence="1">
    <location>
        <position position="48"/>
    </location>
    <ligand>
        <name>Zn(2+)</name>
        <dbReference type="ChEBI" id="CHEBI:29105"/>
        <label>1</label>
    </ligand>
</feature>
<feature type="binding site" evidence="1">
    <location>
        <position position="89"/>
    </location>
    <ligand>
        <name>Zn(2+)</name>
        <dbReference type="ChEBI" id="CHEBI:29105"/>
        <label>1</label>
    </ligand>
</feature>
<feature type="binding site" evidence="1">
    <location>
        <position position="110"/>
    </location>
    <ligand>
        <name>substrate</name>
    </ligand>
</feature>
<feature type="binding site" evidence="1">
    <location>
        <begin position="171"/>
        <end position="173"/>
    </location>
    <ligand>
        <name>substrate</name>
    </ligand>
</feature>
<feature type="binding site" evidence="1">
    <location>
        <position position="313"/>
    </location>
    <ligand>
        <name>Zn(2+)</name>
        <dbReference type="ChEBI" id="CHEBI:29105"/>
        <label>2</label>
    </ligand>
</feature>
<feature type="binding site" evidence="1">
    <location>
        <position position="317"/>
    </location>
    <ligand>
        <name>Zn(2+)</name>
        <dbReference type="ChEBI" id="CHEBI:29105"/>
        <label>2</label>
    </ligand>
</feature>
<feature type="binding site" evidence="1">
    <location>
        <position position="360"/>
    </location>
    <ligand>
        <name>Zn(2+)</name>
        <dbReference type="ChEBI" id="CHEBI:29105"/>
        <label>1</label>
    </ligand>
</feature>
<feature type="binding site" evidence="1">
    <location>
        <position position="361"/>
    </location>
    <ligand>
        <name>Zn(2+)</name>
        <dbReference type="ChEBI" id="CHEBI:29105"/>
        <label>1</label>
    </ligand>
</feature>
<feature type="binding site" evidence="1">
    <location>
        <position position="491"/>
    </location>
    <ligand>
        <name>Zn(2+)</name>
        <dbReference type="ChEBI" id="CHEBI:29105"/>
        <label>2</label>
    </ligand>
</feature>
<evidence type="ECO:0000250" key="1">
    <source>
        <dbReference type="UniProtKB" id="A1YYW7"/>
    </source>
</evidence>
<evidence type="ECO:0000255" key="2"/>
<evidence type="ECO:0000269" key="3">
    <source>
    </source>
</evidence>
<evidence type="ECO:0000303" key="4">
    <source>
    </source>
</evidence>
<evidence type="ECO:0000305" key="5"/>
<evidence type="ECO:0000312" key="6">
    <source>
        <dbReference type="EMBL" id="CAA88739.1"/>
    </source>
</evidence>